<sequence>MESLTLQPIARVDGTINLPGSKSVSNRALLLAALAHGKTVLTNLLDSDDVRHMLNALTALGVSYTLSADRTRCEIIGNGGPLHAEGALELFLGNAGTAMRPLAAALCLGSNDIVLTGEPRMKERPIGHLVDALRLGGAKITYLEQENYPPLRLQGGFTGGNVDVDGSVSSQFLTALLMTAPLAPEDTVIRIKGDLVSKPYIDITLNLMKTFGVEIENQHYQQFVVKGGQSYQSPGTYLVEGDASSASYFLAAAAIKGGTVKVTGIGRNSMQGDIRFADVLEKMGATICWGDDYISCTRGELNAIDMDMNHIPDAAMTIATAALFAKGTTTLRNIYNWRVKETDRLFAMATELRKVGAEVEEGHDYIRITPPEKLNFAEIATYNDHRMAMCFSLVALSDTPVTILDPKCTAKTFPDYFEQLARISQAA</sequence>
<accession>Q3Z3L4</accession>
<dbReference type="EC" id="2.5.1.19" evidence="1"/>
<dbReference type="EMBL" id="CP000038">
    <property type="protein sequence ID" value="AAZ87648.1"/>
    <property type="molecule type" value="Genomic_DNA"/>
</dbReference>
<dbReference type="RefSeq" id="WP_000445231.1">
    <property type="nucleotide sequence ID" value="NC_007384.1"/>
</dbReference>
<dbReference type="SMR" id="Q3Z3L4"/>
<dbReference type="GeneID" id="93776510"/>
<dbReference type="KEGG" id="ssn:SSON_0909"/>
<dbReference type="HOGENOM" id="CLU_024321_0_0_6"/>
<dbReference type="UniPathway" id="UPA00053">
    <property type="reaction ID" value="UER00089"/>
</dbReference>
<dbReference type="Proteomes" id="UP000002529">
    <property type="component" value="Chromosome"/>
</dbReference>
<dbReference type="GO" id="GO:0005737">
    <property type="term" value="C:cytoplasm"/>
    <property type="evidence" value="ECO:0007669"/>
    <property type="project" value="UniProtKB-SubCell"/>
</dbReference>
<dbReference type="GO" id="GO:0003866">
    <property type="term" value="F:3-phosphoshikimate 1-carboxyvinyltransferase activity"/>
    <property type="evidence" value="ECO:0007669"/>
    <property type="project" value="UniProtKB-UniRule"/>
</dbReference>
<dbReference type="GO" id="GO:0008652">
    <property type="term" value="P:amino acid biosynthetic process"/>
    <property type="evidence" value="ECO:0007669"/>
    <property type="project" value="UniProtKB-KW"/>
</dbReference>
<dbReference type="GO" id="GO:0009073">
    <property type="term" value="P:aromatic amino acid family biosynthetic process"/>
    <property type="evidence" value="ECO:0007669"/>
    <property type="project" value="UniProtKB-KW"/>
</dbReference>
<dbReference type="GO" id="GO:0009423">
    <property type="term" value="P:chorismate biosynthetic process"/>
    <property type="evidence" value="ECO:0007669"/>
    <property type="project" value="UniProtKB-UniRule"/>
</dbReference>
<dbReference type="CDD" id="cd01554">
    <property type="entry name" value="EPT-like"/>
    <property type="match status" value="1"/>
</dbReference>
<dbReference type="FunFam" id="3.65.10.10:FF:000003">
    <property type="entry name" value="3-phosphoshikimate 1-carboxyvinyltransferase"/>
    <property type="match status" value="1"/>
</dbReference>
<dbReference type="FunFam" id="3.65.10.10:FF:000004">
    <property type="entry name" value="3-phosphoshikimate 1-carboxyvinyltransferase"/>
    <property type="match status" value="1"/>
</dbReference>
<dbReference type="Gene3D" id="3.65.10.10">
    <property type="entry name" value="Enolpyruvate transferase domain"/>
    <property type="match status" value="2"/>
</dbReference>
<dbReference type="HAMAP" id="MF_00210">
    <property type="entry name" value="EPSP_synth"/>
    <property type="match status" value="1"/>
</dbReference>
<dbReference type="InterPro" id="IPR001986">
    <property type="entry name" value="Enolpyruvate_Tfrase_dom"/>
</dbReference>
<dbReference type="InterPro" id="IPR036968">
    <property type="entry name" value="Enolpyruvate_Tfrase_sf"/>
</dbReference>
<dbReference type="InterPro" id="IPR006264">
    <property type="entry name" value="EPSP_synthase"/>
</dbReference>
<dbReference type="InterPro" id="IPR023193">
    <property type="entry name" value="EPSP_synthase_CS"/>
</dbReference>
<dbReference type="InterPro" id="IPR013792">
    <property type="entry name" value="RNA3'P_cycl/enolpyr_Trfase_a/b"/>
</dbReference>
<dbReference type="NCBIfam" id="TIGR01356">
    <property type="entry name" value="aroA"/>
    <property type="match status" value="1"/>
</dbReference>
<dbReference type="PANTHER" id="PTHR21090">
    <property type="entry name" value="AROM/DEHYDROQUINATE SYNTHASE"/>
    <property type="match status" value="1"/>
</dbReference>
<dbReference type="PANTHER" id="PTHR21090:SF5">
    <property type="entry name" value="PENTAFUNCTIONAL AROM POLYPEPTIDE"/>
    <property type="match status" value="1"/>
</dbReference>
<dbReference type="Pfam" id="PF00275">
    <property type="entry name" value="EPSP_synthase"/>
    <property type="match status" value="1"/>
</dbReference>
<dbReference type="PIRSF" id="PIRSF000505">
    <property type="entry name" value="EPSPS"/>
    <property type="match status" value="1"/>
</dbReference>
<dbReference type="SUPFAM" id="SSF55205">
    <property type="entry name" value="EPT/RTPC-like"/>
    <property type="match status" value="1"/>
</dbReference>
<dbReference type="PROSITE" id="PS00104">
    <property type="entry name" value="EPSP_SYNTHASE_1"/>
    <property type="match status" value="1"/>
</dbReference>
<dbReference type="PROSITE" id="PS00885">
    <property type="entry name" value="EPSP_SYNTHASE_2"/>
    <property type="match status" value="1"/>
</dbReference>
<proteinExistence type="inferred from homology"/>
<reference key="1">
    <citation type="journal article" date="2005" name="Nucleic Acids Res.">
        <title>Genome dynamics and diversity of Shigella species, the etiologic agents of bacillary dysentery.</title>
        <authorList>
            <person name="Yang F."/>
            <person name="Yang J."/>
            <person name="Zhang X."/>
            <person name="Chen L."/>
            <person name="Jiang Y."/>
            <person name="Yan Y."/>
            <person name="Tang X."/>
            <person name="Wang J."/>
            <person name="Xiong Z."/>
            <person name="Dong J."/>
            <person name="Xue Y."/>
            <person name="Zhu Y."/>
            <person name="Xu X."/>
            <person name="Sun L."/>
            <person name="Chen S."/>
            <person name="Nie H."/>
            <person name="Peng J."/>
            <person name="Xu J."/>
            <person name="Wang Y."/>
            <person name="Yuan Z."/>
            <person name="Wen Y."/>
            <person name="Yao Z."/>
            <person name="Shen Y."/>
            <person name="Qiang B."/>
            <person name="Hou Y."/>
            <person name="Yu J."/>
            <person name="Jin Q."/>
        </authorList>
    </citation>
    <scope>NUCLEOTIDE SEQUENCE [LARGE SCALE GENOMIC DNA]</scope>
    <source>
        <strain>Ss046</strain>
    </source>
</reference>
<protein>
    <recommendedName>
        <fullName evidence="1">3-phosphoshikimate 1-carboxyvinyltransferase</fullName>
        <ecNumber evidence="1">2.5.1.19</ecNumber>
    </recommendedName>
    <alternativeName>
        <fullName evidence="1">5-enolpyruvylshikimate-3-phosphate synthase</fullName>
        <shortName evidence="1">EPSP synthase</shortName>
        <shortName evidence="1">EPSPS</shortName>
    </alternativeName>
</protein>
<organism>
    <name type="scientific">Shigella sonnei (strain Ss046)</name>
    <dbReference type="NCBI Taxonomy" id="300269"/>
    <lineage>
        <taxon>Bacteria</taxon>
        <taxon>Pseudomonadati</taxon>
        <taxon>Pseudomonadota</taxon>
        <taxon>Gammaproteobacteria</taxon>
        <taxon>Enterobacterales</taxon>
        <taxon>Enterobacteriaceae</taxon>
        <taxon>Shigella</taxon>
    </lineage>
</organism>
<evidence type="ECO:0000255" key="1">
    <source>
        <dbReference type="HAMAP-Rule" id="MF_00210"/>
    </source>
</evidence>
<comment type="function">
    <text evidence="1">Catalyzes the transfer of the enolpyruvyl moiety of phosphoenolpyruvate (PEP) to the 5-hydroxyl of shikimate-3-phosphate (S3P) to produce enolpyruvyl shikimate-3-phosphate and inorganic phosphate.</text>
</comment>
<comment type="catalytic activity">
    <reaction evidence="1">
        <text>3-phosphoshikimate + phosphoenolpyruvate = 5-O-(1-carboxyvinyl)-3-phosphoshikimate + phosphate</text>
        <dbReference type="Rhea" id="RHEA:21256"/>
        <dbReference type="ChEBI" id="CHEBI:43474"/>
        <dbReference type="ChEBI" id="CHEBI:57701"/>
        <dbReference type="ChEBI" id="CHEBI:58702"/>
        <dbReference type="ChEBI" id="CHEBI:145989"/>
        <dbReference type="EC" id="2.5.1.19"/>
    </reaction>
    <physiologicalReaction direction="left-to-right" evidence="1">
        <dbReference type="Rhea" id="RHEA:21257"/>
    </physiologicalReaction>
</comment>
<comment type="pathway">
    <text evidence="1">Metabolic intermediate biosynthesis; chorismate biosynthesis; chorismate from D-erythrose 4-phosphate and phosphoenolpyruvate: step 6/7.</text>
</comment>
<comment type="subunit">
    <text evidence="1">Monomer.</text>
</comment>
<comment type="subcellular location">
    <subcellularLocation>
        <location evidence="1">Cytoplasm</location>
    </subcellularLocation>
</comment>
<comment type="similarity">
    <text evidence="1">Belongs to the EPSP synthase family.</text>
</comment>
<feature type="chain" id="PRO_1000012482" description="3-phosphoshikimate 1-carboxyvinyltransferase">
    <location>
        <begin position="1"/>
        <end position="427"/>
    </location>
</feature>
<feature type="active site" description="Proton acceptor" evidence="1">
    <location>
        <position position="313"/>
    </location>
</feature>
<feature type="binding site" evidence="1">
    <location>
        <position position="22"/>
    </location>
    <ligand>
        <name>3-phosphoshikimate</name>
        <dbReference type="ChEBI" id="CHEBI:145989"/>
    </ligand>
</feature>
<feature type="binding site" evidence="1">
    <location>
        <position position="22"/>
    </location>
    <ligand>
        <name>phosphoenolpyruvate</name>
        <dbReference type="ChEBI" id="CHEBI:58702"/>
    </ligand>
</feature>
<feature type="binding site" evidence="1">
    <location>
        <position position="23"/>
    </location>
    <ligand>
        <name>3-phosphoshikimate</name>
        <dbReference type="ChEBI" id="CHEBI:145989"/>
    </ligand>
</feature>
<feature type="binding site" evidence="1">
    <location>
        <position position="27"/>
    </location>
    <ligand>
        <name>3-phosphoshikimate</name>
        <dbReference type="ChEBI" id="CHEBI:145989"/>
    </ligand>
</feature>
<feature type="binding site" evidence="1">
    <location>
        <position position="96"/>
    </location>
    <ligand>
        <name>phosphoenolpyruvate</name>
        <dbReference type="ChEBI" id="CHEBI:58702"/>
    </ligand>
</feature>
<feature type="binding site" evidence="1">
    <location>
        <position position="124"/>
    </location>
    <ligand>
        <name>phosphoenolpyruvate</name>
        <dbReference type="ChEBI" id="CHEBI:58702"/>
    </ligand>
</feature>
<feature type="binding site" evidence="1">
    <location>
        <position position="169"/>
    </location>
    <ligand>
        <name>3-phosphoshikimate</name>
        <dbReference type="ChEBI" id="CHEBI:145989"/>
    </ligand>
</feature>
<feature type="binding site" evidence="1">
    <location>
        <position position="170"/>
    </location>
    <ligand>
        <name>3-phosphoshikimate</name>
        <dbReference type="ChEBI" id="CHEBI:145989"/>
    </ligand>
</feature>
<feature type="binding site" evidence="1">
    <location>
        <position position="171"/>
    </location>
    <ligand>
        <name>3-phosphoshikimate</name>
        <dbReference type="ChEBI" id="CHEBI:145989"/>
    </ligand>
</feature>
<feature type="binding site" evidence="1">
    <location>
        <position position="171"/>
    </location>
    <ligand>
        <name>phosphoenolpyruvate</name>
        <dbReference type="ChEBI" id="CHEBI:58702"/>
    </ligand>
</feature>
<feature type="binding site" evidence="1">
    <location>
        <position position="197"/>
    </location>
    <ligand>
        <name>3-phosphoshikimate</name>
        <dbReference type="ChEBI" id="CHEBI:145989"/>
    </ligand>
</feature>
<feature type="binding site" evidence="1">
    <location>
        <position position="313"/>
    </location>
    <ligand>
        <name>3-phosphoshikimate</name>
        <dbReference type="ChEBI" id="CHEBI:145989"/>
    </ligand>
</feature>
<feature type="binding site" evidence="1">
    <location>
        <position position="336"/>
    </location>
    <ligand>
        <name>3-phosphoshikimate</name>
        <dbReference type="ChEBI" id="CHEBI:145989"/>
    </ligand>
</feature>
<feature type="binding site" evidence="1">
    <location>
        <position position="340"/>
    </location>
    <ligand>
        <name>3-phosphoshikimate</name>
        <dbReference type="ChEBI" id="CHEBI:145989"/>
    </ligand>
</feature>
<feature type="binding site" evidence="1">
    <location>
        <position position="344"/>
    </location>
    <ligand>
        <name>phosphoenolpyruvate</name>
        <dbReference type="ChEBI" id="CHEBI:58702"/>
    </ligand>
</feature>
<feature type="binding site" evidence="1">
    <location>
        <position position="386"/>
    </location>
    <ligand>
        <name>phosphoenolpyruvate</name>
        <dbReference type="ChEBI" id="CHEBI:58702"/>
    </ligand>
</feature>
<feature type="binding site" evidence="1">
    <location>
        <position position="411"/>
    </location>
    <ligand>
        <name>phosphoenolpyruvate</name>
        <dbReference type="ChEBI" id="CHEBI:58702"/>
    </ligand>
</feature>
<name>AROA_SHISS</name>
<keyword id="KW-0028">Amino-acid biosynthesis</keyword>
<keyword id="KW-0057">Aromatic amino acid biosynthesis</keyword>
<keyword id="KW-0963">Cytoplasm</keyword>
<keyword id="KW-1185">Reference proteome</keyword>
<keyword id="KW-0808">Transferase</keyword>
<gene>
    <name evidence="1" type="primary">aroA</name>
    <name type="ordered locus">SSON_0909</name>
</gene>